<dbReference type="EC" id="3.5.1.5" evidence="1"/>
<dbReference type="EMBL" id="CP000285">
    <property type="protein sequence ID" value="ABE59656.1"/>
    <property type="molecule type" value="Genomic_DNA"/>
</dbReference>
<dbReference type="RefSeq" id="WP_011507602.1">
    <property type="nucleotide sequence ID" value="NC_007963.1"/>
</dbReference>
<dbReference type="SMR" id="Q1QV52"/>
<dbReference type="STRING" id="290398.Csal_2306"/>
<dbReference type="GeneID" id="95335018"/>
<dbReference type="KEGG" id="csa:Csal_2306"/>
<dbReference type="eggNOG" id="COG0832">
    <property type="taxonomic scope" value="Bacteria"/>
</dbReference>
<dbReference type="HOGENOM" id="CLU_129707_1_1_6"/>
<dbReference type="OrthoDB" id="9797217at2"/>
<dbReference type="UniPathway" id="UPA00258">
    <property type="reaction ID" value="UER00370"/>
</dbReference>
<dbReference type="Proteomes" id="UP000000239">
    <property type="component" value="Chromosome"/>
</dbReference>
<dbReference type="GO" id="GO:0035550">
    <property type="term" value="C:urease complex"/>
    <property type="evidence" value="ECO:0007669"/>
    <property type="project" value="InterPro"/>
</dbReference>
<dbReference type="GO" id="GO:0009039">
    <property type="term" value="F:urease activity"/>
    <property type="evidence" value="ECO:0007669"/>
    <property type="project" value="UniProtKB-UniRule"/>
</dbReference>
<dbReference type="GO" id="GO:0043419">
    <property type="term" value="P:urea catabolic process"/>
    <property type="evidence" value="ECO:0007669"/>
    <property type="project" value="UniProtKB-UniRule"/>
</dbReference>
<dbReference type="CDD" id="cd00407">
    <property type="entry name" value="Urease_beta"/>
    <property type="match status" value="1"/>
</dbReference>
<dbReference type="FunFam" id="2.10.150.10:FF:000001">
    <property type="entry name" value="Urease subunit beta"/>
    <property type="match status" value="1"/>
</dbReference>
<dbReference type="Gene3D" id="2.10.150.10">
    <property type="entry name" value="Urease, beta subunit"/>
    <property type="match status" value="1"/>
</dbReference>
<dbReference type="HAMAP" id="MF_01954">
    <property type="entry name" value="Urease_beta"/>
    <property type="match status" value="1"/>
</dbReference>
<dbReference type="InterPro" id="IPR002019">
    <property type="entry name" value="Urease_beta-like"/>
</dbReference>
<dbReference type="InterPro" id="IPR036461">
    <property type="entry name" value="Urease_betasu_sf"/>
</dbReference>
<dbReference type="InterPro" id="IPR050069">
    <property type="entry name" value="Urease_subunit"/>
</dbReference>
<dbReference type="NCBIfam" id="NF009682">
    <property type="entry name" value="PRK13203.1"/>
    <property type="match status" value="1"/>
</dbReference>
<dbReference type="NCBIfam" id="TIGR00192">
    <property type="entry name" value="urease_beta"/>
    <property type="match status" value="1"/>
</dbReference>
<dbReference type="PANTHER" id="PTHR33569">
    <property type="entry name" value="UREASE"/>
    <property type="match status" value="1"/>
</dbReference>
<dbReference type="PANTHER" id="PTHR33569:SF1">
    <property type="entry name" value="UREASE"/>
    <property type="match status" value="1"/>
</dbReference>
<dbReference type="Pfam" id="PF00699">
    <property type="entry name" value="Urease_beta"/>
    <property type="match status" value="1"/>
</dbReference>
<dbReference type="SUPFAM" id="SSF51278">
    <property type="entry name" value="Urease, beta-subunit"/>
    <property type="match status" value="1"/>
</dbReference>
<gene>
    <name evidence="1" type="primary">ureB</name>
    <name type="ordered locus">Csal_2306</name>
</gene>
<comment type="catalytic activity">
    <reaction evidence="1">
        <text>urea + 2 H2O + H(+) = hydrogencarbonate + 2 NH4(+)</text>
        <dbReference type="Rhea" id="RHEA:20557"/>
        <dbReference type="ChEBI" id="CHEBI:15377"/>
        <dbReference type="ChEBI" id="CHEBI:15378"/>
        <dbReference type="ChEBI" id="CHEBI:16199"/>
        <dbReference type="ChEBI" id="CHEBI:17544"/>
        <dbReference type="ChEBI" id="CHEBI:28938"/>
        <dbReference type="EC" id="3.5.1.5"/>
    </reaction>
</comment>
<comment type="pathway">
    <text evidence="1">Nitrogen metabolism; urea degradation; CO(2) and NH(3) from urea (urease route): step 1/1.</text>
</comment>
<comment type="subunit">
    <text evidence="1">Heterotrimer of UreA (gamma), UreB (beta) and UreC (alpha) subunits. Three heterotrimers associate to form the active enzyme.</text>
</comment>
<comment type="subcellular location">
    <subcellularLocation>
        <location evidence="1">Cytoplasm</location>
    </subcellularLocation>
</comment>
<comment type="similarity">
    <text evidence="1">Belongs to the urease beta subunit family.</text>
</comment>
<evidence type="ECO:0000255" key="1">
    <source>
        <dbReference type="HAMAP-Rule" id="MF_01954"/>
    </source>
</evidence>
<protein>
    <recommendedName>
        <fullName evidence="1">Urease subunit beta</fullName>
        <ecNumber evidence="1">3.5.1.5</ecNumber>
    </recommendedName>
    <alternativeName>
        <fullName evidence="1">Urea amidohydrolase subunit beta</fullName>
    </alternativeName>
</protein>
<feature type="chain" id="PRO_1000070729" description="Urease subunit beta">
    <location>
        <begin position="1"/>
        <end position="108"/>
    </location>
</feature>
<proteinExistence type="inferred from homology"/>
<keyword id="KW-0963">Cytoplasm</keyword>
<keyword id="KW-0378">Hydrolase</keyword>
<keyword id="KW-1185">Reference proteome</keyword>
<reference key="1">
    <citation type="journal article" date="2011" name="Stand. Genomic Sci.">
        <title>Complete genome sequence of the halophilic and highly halotolerant Chromohalobacter salexigens type strain (1H11(T)).</title>
        <authorList>
            <person name="Copeland A."/>
            <person name="O'Connor K."/>
            <person name="Lucas S."/>
            <person name="Lapidus A."/>
            <person name="Berry K.W."/>
            <person name="Detter J.C."/>
            <person name="Del Rio T.G."/>
            <person name="Hammon N."/>
            <person name="Dalin E."/>
            <person name="Tice H."/>
            <person name="Pitluck S."/>
            <person name="Bruce D."/>
            <person name="Goodwin L."/>
            <person name="Han C."/>
            <person name="Tapia R."/>
            <person name="Saunders E."/>
            <person name="Schmutz J."/>
            <person name="Brettin T."/>
            <person name="Larimer F."/>
            <person name="Land M."/>
            <person name="Hauser L."/>
            <person name="Vargas C."/>
            <person name="Nieto J.J."/>
            <person name="Kyrpides N.C."/>
            <person name="Ivanova N."/>
            <person name="Goker M."/>
            <person name="Klenk H.P."/>
            <person name="Csonka L.N."/>
            <person name="Woyke T."/>
        </authorList>
    </citation>
    <scope>NUCLEOTIDE SEQUENCE [LARGE SCALE GENOMIC DNA]</scope>
    <source>
        <strain>ATCC BAA-138 / DSM 3043 / CIP 106854 / NCIMB 13768 / 1H11</strain>
    </source>
</reference>
<sequence>MIPGEYQLQDGEIELCAGRERITVEVANTGDRPIQIGSHYHFAEANPALIFDRDKTRGYRLDVAAGTAIRFEPGQRREVTLIPFVGRRHVYGFRQAVMGALDEKGATS</sequence>
<organism>
    <name type="scientific">Chromohalobacter salexigens (strain ATCC BAA-138 / DSM 3043 / CIP 106854 / NCIMB 13768 / 1H11)</name>
    <dbReference type="NCBI Taxonomy" id="290398"/>
    <lineage>
        <taxon>Bacteria</taxon>
        <taxon>Pseudomonadati</taxon>
        <taxon>Pseudomonadota</taxon>
        <taxon>Gammaproteobacteria</taxon>
        <taxon>Oceanospirillales</taxon>
        <taxon>Halomonadaceae</taxon>
        <taxon>Chromohalobacter</taxon>
    </lineage>
</organism>
<name>URE2_CHRSD</name>
<accession>Q1QV52</accession>